<comment type="function">
    <text evidence="1">May play a key role in the regulation of the intracellular concentration of adenosylhomocysteine.</text>
</comment>
<comment type="catalytic activity">
    <reaction evidence="1">
        <text>S-adenosyl-L-homocysteine + H2O = L-homocysteine + adenosine</text>
        <dbReference type="Rhea" id="RHEA:21708"/>
        <dbReference type="ChEBI" id="CHEBI:15377"/>
        <dbReference type="ChEBI" id="CHEBI:16335"/>
        <dbReference type="ChEBI" id="CHEBI:57856"/>
        <dbReference type="ChEBI" id="CHEBI:58199"/>
        <dbReference type="EC" id="3.13.2.1"/>
    </reaction>
</comment>
<comment type="cofactor">
    <cofactor evidence="1">
        <name>NAD(+)</name>
        <dbReference type="ChEBI" id="CHEBI:57540"/>
    </cofactor>
    <text evidence="1">Binds 1 NAD(+) per subunit.</text>
</comment>
<comment type="pathway">
    <text evidence="1">Amino-acid biosynthesis; L-homocysteine biosynthesis; L-homocysteine from S-adenosyl-L-homocysteine: step 1/1.</text>
</comment>
<comment type="subcellular location">
    <subcellularLocation>
        <location evidence="1">Cytoplasm</location>
    </subcellularLocation>
</comment>
<comment type="similarity">
    <text evidence="1">Belongs to the adenosylhomocysteinase family.</text>
</comment>
<proteinExistence type="inferred from homology"/>
<dbReference type="EC" id="3.13.2.1" evidence="1"/>
<dbReference type="EMBL" id="AP009493">
    <property type="protein sequence ID" value="BAG21342.1"/>
    <property type="molecule type" value="Genomic_DNA"/>
</dbReference>
<dbReference type="RefSeq" id="WP_003968738.1">
    <property type="nucleotide sequence ID" value="NC_010572.1"/>
</dbReference>
<dbReference type="SMR" id="B1VUW6"/>
<dbReference type="KEGG" id="sgr:SGR_4513"/>
<dbReference type="eggNOG" id="COG0499">
    <property type="taxonomic scope" value="Bacteria"/>
</dbReference>
<dbReference type="HOGENOM" id="CLU_025194_2_1_11"/>
<dbReference type="UniPathway" id="UPA00314">
    <property type="reaction ID" value="UER00076"/>
</dbReference>
<dbReference type="Proteomes" id="UP000001685">
    <property type="component" value="Chromosome"/>
</dbReference>
<dbReference type="GO" id="GO:0005829">
    <property type="term" value="C:cytosol"/>
    <property type="evidence" value="ECO:0007669"/>
    <property type="project" value="TreeGrafter"/>
</dbReference>
<dbReference type="GO" id="GO:0004013">
    <property type="term" value="F:adenosylhomocysteinase activity"/>
    <property type="evidence" value="ECO:0007669"/>
    <property type="project" value="UniProtKB-UniRule"/>
</dbReference>
<dbReference type="GO" id="GO:0071269">
    <property type="term" value="P:L-homocysteine biosynthetic process"/>
    <property type="evidence" value="ECO:0007669"/>
    <property type="project" value="UniProtKB-UniRule"/>
</dbReference>
<dbReference type="GO" id="GO:0006730">
    <property type="term" value="P:one-carbon metabolic process"/>
    <property type="evidence" value="ECO:0007669"/>
    <property type="project" value="UniProtKB-KW"/>
</dbReference>
<dbReference type="GO" id="GO:0033353">
    <property type="term" value="P:S-adenosylmethionine cycle"/>
    <property type="evidence" value="ECO:0007669"/>
    <property type="project" value="TreeGrafter"/>
</dbReference>
<dbReference type="CDD" id="cd00401">
    <property type="entry name" value="SAHH"/>
    <property type="match status" value="1"/>
</dbReference>
<dbReference type="FunFam" id="3.40.50.720:FF:000004">
    <property type="entry name" value="Adenosylhomocysteinase"/>
    <property type="match status" value="1"/>
</dbReference>
<dbReference type="Gene3D" id="3.40.50.1480">
    <property type="entry name" value="Adenosylhomocysteinase-like"/>
    <property type="match status" value="1"/>
</dbReference>
<dbReference type="Gene3D" id="3.40.50.720">
    <property type="entry name" value="NAD(P)-binding Rossmann-like Domain"/>
    <property type="match status" value="1"/>
</dbReference>
<dbReference type="HAMAP" id="MF_00563">
    <property type="entry name" value="AdoHcyase"/>
    <property type="match status" value="1"/>
</dbReference>
<dbReference type="InterPro" id="IPR042172">
    <property type="entry name" value="Adenosylhomocyst_ase-like_sf"/>
</dbReference>
<dbReference type="InterPro" id="IPR000043">
    <property type="entry name" value="Adenosylhomocysteinase-like"/>
</dbReference>
<dbReference type="InterPro" id="IPR015878">
    <property type="entry name" value="Ado_hCys_hydrolase_NAD-bd"/>
</dbReference>
<dbReference type="InterPro" id="IPR036291">
    <property type="entry name" value="NAD(P)-bd_dom_sf"/>
</dbReference>
<dbReference type="InterPro" id="IPR020082">
    <property type="entry name" value="S-Ado-L-homoCys_hydrolase_CS"/>
</dbReference>
<dbReference type="NCBIfam" id="TIGR00936">
    <property type="entry name" value="ahcY"/>
    <property type="match status" value="1"/>
</dbReference>
<dbReference type="NCBIfam" id="NF004005">
    <property type="entry name" value="PRK05476.2-3"/>
    <property type="match status" value="1"/>
</dbReference>
<dbReference type="PANTHER" id="PTHR23420">
    <property type="entry name" value="ADENOSYLHOMOCYSTEINASE"/>
    <property type="match status" value="1"/>
</dbReference>
<dbReference type="PANTHER" id="PTHR23420:SF0">
    <property type="entry name" value="ADENOSYLHOMOCYSTEINASE"/>
    <property type="match status" value="1"/>
</dbReference>
<dbReference type="Pfam" id="PF05221">
    <property type="entry name" value="AdoHcyase"/>
    <property type="match status" value="1"/>
</dbReference>
<dbReference type="Pfam" id="PF00670">
    <property type="entry name" value="AdoHcyase_NAD"/>
    <property type="match status" value="1"/>
</dbReference>
<dbReference type="PIRSF" id="PIRSF001109">
    <property type="entry name" value="Ad_hcy_hydrolase"/>
    <property type="match status" value="1"/>
</dbReference>
<dbReference type="SMART" id="SM00996">
    <property type="entry name" value="AdoHcyase"/>
    <property type="match status" value="1"/>
</dbReference>
<dbReference type="SMART" id="SM00997">
    <property type="entry name" value="AdoHcyase_NAD"/>
    <property type="match status" value="1"/>
</dbReference>
<dbReference type="SUPFAM" id="SSF52283">
    <property type="entry name" value="Formate/glycerate dehydrogenase catalytic domain-like"/>
    <property type="match status" value="1"/>
</dbReference>
<dbReference type="SUPFAM" id="SSF51735">
    <property type="entry name" value="NAD(P)-binding Rossmann-fold domains"/>
    <property type="match status" value="1"/>
</dbReference>
<dbReference type="PROSITE" id="PS00738">
    <property type="entry name" value="ADOHCYASE_1"/>
    <property type="match status" value="1"/>
</dbReference>
<dbReference type="PROSITE" id="PS00739">
    <property type="entry name" value="ADOHCYASE_2"/>
    <property type="match status" value="1"/>
</dbReference>
<feature type="chain" id="PRO_1000129302" description="Adenosylhomocysteinase">
    <location>
        <begin position="1"/>
        <end position="485"/>
    </location>
</feature>
<feature type="binding site" evidence="1">
    <location>
        <position position="60"/>
    </location>
    <ligand>
        <name>substrate</name>
    </ligand>
</feature>
<feature type="binding site" evidence="1">
    <location>
        <position position="146"/>
    </location>
    <ligand>
        <name>substrate</name>
    </ligand>
</feature>
<feature type="binding site" evidence="1">
    <location>
        <position position="208"/>
    </location>
    <ligand>
        <name>substrate</name>
    </ligand>
</feature>
<feature type="binding site" evidence="1">
    <location>
        <begin position="209"/>
        <end position="211"/>
    </location>
    <ligand>
        <name>NAD(+)</name>
        <dbReference type="ChEBI" id="CHEBI:57540"/>
    </ligand>
</feature>
<feature type="binding site" evidence="1">
    <location>
        <position position="238"/>
    </location>
    <ligand>
        <name>substrate</name>
    </ligand>
</feature>
<feature type="binding site" evidence="1">
    <location>
        <position position="242"/>
    </location>
    <ligand>
        <name>substrate</name>
    </ligand>
</feature>
<feature type="binding site" evidence="1">
    <location>
        <position position="243"/>
    </location>
    <ligand>
        <name>NAD(+)</name>
        <dbReference type="ChEBI" id="CHEBI:57540"/>
    </ligand>
</feature>
<feature type="binding site" evidence="1">
    <location>
        <begin position="272"/>
        <end position="277"/>
    </location>
    <ligand>
        <name>NAD(+)</name>
        <dbReference type="ChEBI" id="CHEBI:57540"/>
    </ligand>
</feature>
<feature type="binding site" evidence="1">
    <location>
        <position position="295"/>
    </location>
    <ligand>
        <name>NAD(+)</name>
        <dbReference type="ChEBI" id="CHEBI:57540"/>
    </ligand>
</feature>
<feature type="binding site" evidence="1">
    <location>
        <position position="330"/>
    </location>
    <ligand>
        <name>NAD(+)</name>
        <dbReference type="ChEBI" id="CHEBI:57540"/>
    </ligand>
</feature>
<feature type="binding site" evidence="1">
    <location>
        <begin position="351"/>
        <end position="353"/>
    </location>
    <ligand>
        <name>NAD(+)</name>
        <dbReference type="ChEBI" id="CHEBI:57540"/>
    </ligand>
</feature>
<feature type="binding site" evidence="1">
    <location>
        <position position="399"/>
    </location>
    <ligand>
        <name>NAD(+)</name>
        <dbReference type="ChEBI" id="CHEBI:57540"/>
    </ligand>
</feature>
<organism>
    <name type="scientific">Streptomyces griseus subsp. griseus (strain JCM 4626 / CBS 651.72 / NBRC 13350 / KCC S-0626 / ISP 5235)</name>
    <dbReference type="NCBI Taxonomy" id="455632"/>
    <lineage>
        <taxon>Bacteria</taxon>
        <taxon>Bacillati</taxon>
        <taxon>Actinomycetota</taxon>
        <taxon>Actinomycetes</taxon>
        <taxon>Kitasatosporales</taxon>
        <taxon>Streptomycetaceae</taxon>
        <taxon>Streptomyces</taxon>
    </lineage>
</organism>
<reference key="1">
    <citation type="journal article" date="2008" name="J. Bacteriol.">
        <title>Genome sequence of the streptomycin-producing microorganism Streptomyces griseus IFO 13350.</title>
        <authorList>
            <person name="Ohnishi Y."/>
            <person name="Ishikawa J."/>
            <person name="Hara H."/>
            <person name="Suzuki H."/>
            <person name="Ikenoya M."/>
            <person name="Ikeda H."/>
            <person name="Yamashita A."/>
            <person name="Hattori M."/>
            <person name="Horinouchi S."/>
        </authorList>
    </citation>
    <scope>NUCLEOTIDE SEQUENCE [LARGE SCALE GENOMIC DNA]</scope>
    <source>
        <strain>JCM 4626 / CBS 651.72 / NBRC 13350 / KCC S-0626 / ISP 5235</strain>
    </source>
</reference>
<sequence length="485" mass="52634">MTTATNRQDFKVADLSLAPFGRKEITLAEHEMPGLMSIRKEFAAAQPLAGARITGSLHMTVQTAVLIETLVALGAEVRWASCNIFSTQDHAAAAIAVGPNGTPEAPAGVPVFAWKGETLEEYWWCTEQALTWPNTPTGGPNMILDDGGDATLLVHKGVEFEKAGAAPDPSTADSEEYAHILTLLNRTLGEAPQKWTQLASEIRGVTEETTTGVHRLYEMHRDGSLLFPAINVNDAVTKSKFDNKYGCRHSLIDGINRATDVLIGGKTAVVFGYGDVGKGCAESLRGQGARVIITEIDPICALQAAMDGYQVATLDDVVEQADIFVTTTGNKDIIMAKDMARMKHQAIVGNIGHFDNEIDMAGLAKIDGIVKDEVKPQVHTWTFPDGKVLIVLSEGRLLNLGNATGHPSFVMSNSFADQTLAQIELFTKPEDYPTDVYVLPKHLDEKVARLHLDALGVKLTTLRPEQAAYIGVEVEGPYKPDHYRY</sequence>
<protein>
    <recommendedName>
        <fullName evidence="1">Adenosylhomocysteinase</fullName>
        <ecNumber evidence="1">3.13.2.1</ecNumber>
    </recommendedName>
    <alternativeName>
        <fullName evidence="1">S-adenosyl-L-homocysteine hydrolase</fullName>
        <shortName evidence="1">AdoHcyase</shortName>
    </alternativeName>
</protein>
<evidence type="ECO:0000255" key="1">
    <source>
        <dbReference type="HAMAP-Rule" id="MF_00563"/>
    </source>
</evidence>
<gene>
    <name evidence="1" type="primary">ahcY</name>
    <name type="ordered locus">SGR_4513</name>
</gene>
<name>SAHH_STRGG</name>
<accession>B1VUW6</accession>
<keyword id="KW-0963">Cytoplasm</keyword>
<keyword id="KW-0378">Hydrolase</keyword>
<keyword id="KW-0520">NAD</keyword>
<keyword id="KW-0554">One-carbon metabolism</keyword>